<sequence length="488" mass="55672">MEKSWFNLMFSKGELEYRSGLNKAMDSIENEKTTISKDRFIYDMDKNFYGWGERSSYYNNVDLLVSSKDIRNFISDDTFFVRDSNKNSYSIYFDIKKKKFEINNDLSDLEFFFYSYSYCSSSYLNNRSKSDNDPHYDPYIKDTKYNCNNHINSCIDSYFRSHICIDSHFLSDSNNSNESYIYNFICSESGKIRESKNYKIRTNRNRNNLMSSKDFDITKNYNQLWIQCDNCYGLMYKKVEMNVCEECGHYLKMTSSERIELSIDPGTWNPMDEDMVSTDPIKFHSGEEPYKNRIDSAQKTTGLTDAVQTGIGQLNGIPTALGVMDFKFMGGSMGSVVGEKITRLIEYATNQCLPLILVCSSGGARMQEGSLSLMQMAKISSVLCNYQSSKKLFYISILTSPTTGGVTASFGMLGDIIIAEPYAYIAFAGKRVIEQTLKKAVPEGSQAAESLLRKGLLDAIVPRNPLKGVVSELFQLHAFFPLNKNEIK</sequence>
<protein>
    <recommendedName>
        <fullName evidence="2">Acetyl-coenzyme A carboxylase carboxyl transferase subunit beta, chloroplastic</fullName>
        <shortName evidence="2">ACCase subunit beta</shortName>
        <shortName evidence="2">Acetyl-CoA carboxylase carboxyltransferase subunit beta</shortName>
        <ecNumber evidence="2">2.1.3.15</ecNumber>
    </recommendedName>
</protein>
<organism>
    <name type="scientific">Arabis hirsuta</name>
    <name type="common">Hairy rock-cress</name>
    <name type="synonym">Turritis hirsuta</name>
    <dbReference type="NCBI Taxonomy" id="78191"/>
    <lineage>
        <taxon>Eukaryota</taxon>
        <taxon>Viridiplantae</taxon>
        <taxon>Streptophyta</taxon>
        <taxon>Embryophyta</taxon>
        <taxon>Tracheophyta</taxon>
        <taxon>Spermatophyta</taxon>
        <taxon>Magnoliopsida</taxon>
        <taxon>eudicotyledons</taxon>
        <taxon>Gunneridae</taxon>
        <taxon>Pentapetalae</taxon>
        <taxon>rosids</taxon>
        <taxon>malvids</taxon>
        <taxon>Brassicales</taxon>
        <taxon>Brassicaceae</taxon>
        <taxon>Arabideae</taxon>
        <taxon>Arabis</taxon>
    </lineage>
</organism>
<evidence type="ECO:0000250" key="1"/>
<evidence type="ECO:0000255" key="2">
    <source>
        <dbReference type="HAMAP-Rule" id="MF_01395"/>
    </source>
</evidence>
<evidence type="ECO:0000255" key="3">
    <source>
        <dbReference type="PROSITE-ProRule" id="PRU01136"/>
    </source>
</evidence>
<geneLocation type="chloroplast"/>
<gene>
    <name evidence="2" type="primary">accD</name>
</gene>
<dbReference type="EC" id="2.1.3.15" evidence="2"/>
<dbReference type="EMBL" id="AP009369">
    <property type="protein sequence ID" value="BAF50032.1"/>
    <property type="molecule type" value="Genomic_DNA"/>
</dbReference>
<dbReference type="RefSeq" id="YP_001123208.1">
    <property type="nucleotide sequence ID" value="NC_009268.1"/>
</dbReference>
<dbReference type="SMR" id="A4QK27"/>
<dbReference type="GeneID" id="4962611"/>
<dbReference type="UniPathway" id="UPA00655">
    <property type="reaction ID" value="UER00711"/>
</dbReference>
<dbReference type="GO" id="GO:0009317">
    <property type="term" value="C:acetyl-CoA carboxylase complex"/>
    <property type="evidence" value="ECO:0007669"/>
    <property type="project" value="InterPro"/>
</dbReference>
<dbReference type="GO" id="GO:0009570">
    <property type="term" value="C:chloroplast stroma"/>
    <property type="evidence" value="ECO:0007669"/>
    <property type="project" value="UniProtKB-SubCell"/>
</dbReference>
<dbReference type="GO" id="GO:0003989">
    <property type="term" value="F:acetyl-CoA carboxylase activity"/>
    <property type="evidence" value="ECO:0007669"/>
    <property type="project" value="InterPro"/>
</dbReference>
<dbReference type="GO" id="GO:0005524">
    <property type="term" value="F:ATP binding"/>
    <property type="evidence" value="ECO:0007669"/>
    <property type="project" value="UniProtKB-KW"/>
</dbReference>
<dbReference type="GO" id="GO:0016743">
    <property type="term" value="F:carboxyl- or carbamoyltransferase activity"/>
    <property type="evidence" value="ECO:0007669"/>
    <property type="project" value="UniProtKB-UniRule"/>
</dbReference>
<dbReference type="GO" id="GO:0008270">
    <property type="term" value="F:zinc ion binding"/>
    <property type="evidence" value="ECO:0007669"/>
    <property type="project" value="UniProtKB-UniRule"/>
</dbReference>
<dbReference type="GO" id="GO:0006633">
    <property type="term" value="P:fatty acid biosynthetic process"/>
    <property type="evidence" value="ECO:0007669"/>
    <property type="project" value="UniProtKB-KW"/>
</dbReference>
<dbReference type="GO" id="GO:2001295">
    <property type="term" value="P:malonyl-CoA biosynthetic process"/>
    <property type="evidence" value="ECO:0007669"/>
    <property type="project" value="UniProtKB-UniRule"/>
</dbReference>
<dbReference type="Gene3D" id="3.90.226.10">
    <property type="entry name" value="2-enoyl-CoA Hydratase, Chain A, domain 1"/>
    <property type="match status" value="1"/>
</dbReference>
<dbReference type="HAMAP" id="MF_01395">
    <property type="entry name" value="AcetylCoA_CT_beta"/>
    <property type="match status" value="1"/>
</dbReference>
<dbReference type="InterPro" id="IPR034733">
    <property type="entry name" value="AcCoA_carboxyl_beta"/>
</dbReference>
<dbReference type="InterPro" id="IPR000438">
    <property type="entry name" value="Acetyl_CoA_COase_Trfase_b_su"/>
</dbReference>
<dbReference type="InterPro" id="IPR029045">
    <property type="entry name" value="ClpP/crotonase-like_dom_sf"/>
</dbReference>
<dbReference type="InterPro" id="IPR011762">
    <property type="entry name" value="COA_CT_N"/>
</dbReference>
<dbReference type="NCBIfam" id="TIGR00515">
    <property type="entry name" value="accD"/>
    <property type="match status" value="1"/>
</dbReference>
<dbReference type="PANTHER" id="PTHR42995">
    <property type="entry name" value="ACETYL-COENZYME A CARBOXYLASE CARBOXYL TRANSFERASE SUBUNIT BETA, CHLOROPLASTIC"/>
    <property type="match status" value="1"/>
</dbReference>
<dbReference type="PANTHER" id="PTHR42995:SF5">
    <property type="entry name" value="ACETYL-COENZYME A CARBOXYLASE CARBOXYL TRANSFERASE SUBUNIT BETA, CHLOROPLASTIC"/>
    <property type="match status" value="1"/>
</dbReference>
<dbReference type="Pfam" id="PF01039">
    <property type="entry name" value="Carboxyl_trans"/>
    <property type="match status" value="1"/>
</dbReference>
<dbReference type="PRINTS" id="PR01070">
    <property type="entry name" value="ACCCTRFRASEB"/>
</dbReference>
<dbReference type="SUPFAM" id="SSF52096">
    <property type="entry name" value="ClpP/crotonase"/>
    <property type="match status" value="1"/>
</dbReference>
<dbReference type="PROSITE" id="PS50980">
    <property type="entry name" value="COA_CT_NTER"/>
    <property type="match status" value="1"/>
</dbReference>
<accession>A4QK27</accession>
<proteinExistence type="inferred from homology"/>
<keyword id="KW-0067">ATP-binding</keyword>
<keyword id="KW-0150">Chloroplast</keyword>
<keyword id="KW-0275">Fatty acid biosynthesis</keyword>
<keyword id="KW-0276">Fatty acid metabolism</keyword>
<keyword id="KW-0444">Lipid biosynthesis</keyword>
<keyword id="KW-0443">Lipid metabolism</keyword>
<keyword id="KW-0479">Metal-binding</keyword>
<keyword id="KW-0547">Nucleotide-binding</keyword>
<keyword id="KW-0934">Plastid</keyword>
<keyword id="KW-0808">Transferase</keyword>
<keyword id="KW-0862">Zinc</keyword>
<keyword id="KW-0863">Zinc-finger</keyword>
<feature type="chain" id="PRO_0000359121" description="Acetyl-coenzyme A carboxylase carboxyl transferase subunit beta, chloroplastic">
    <location>
        <begin position="1"/>
        <end position="488"/>
    </location>
</feature>
<feature type="domain" description="CoA carboxyltransferase N-terminal" evidence="3">
    <location>
        <begin position="224"/>
        <end position="488"/>
    </location>
</feature>
<feature type="zinc finger region" description="C4-type" evidence="2">
    <location>
        <begin position="228"/>
        <end position="247"/>
    </location>
</feature>
<feature type="binding site" evidence="2">
    <location>
        <position position="228"/>
    </location>
    <ligand>
        <name>Zn(2+)</name>
        <dbReference type="ChEBI" id="CHEBI:29105"/>
    </ligand>
</feature>
<feature type="binding site" evidence="2">
    <location>
        <position position="231"/>
    </location>
    <ligand>
        <name>Zn(2+)</name>
        <dbReference type="ChEBI" id="CHEBI:29105"/>
    </ligand>
</feature>
<feature type="binding site" evidence="2">
    <location>
        <position position="244"/>
    </location>
    <ligand>
        <name>Zn(2+)</name>
        <dbReference type="ChEBI" id="CHEBI:29105"/>
    </ligand>
</feature>
<feature type="binding site" evidence="2">
    <location>
        <position position="247"/>
    </location>
    <ligand>
        <name>Zn(2+)</name>
        <dbReference type="ChEBI" id="CHEBI:29105"/>
    </ligand>
</feature>
<reference key="1">
    <citation type="submission" date="2007-03" db="EMBL/GenBank/DDBJ databases">
        <title>Sequencing analysis of Arabis hirsuta chloroplast DNA.</title>
        <authorList>
            <person name="Hosouchi T."/>
            <person name="Tsuruoka H."/>
            <person name="Kotani H."/>
        </authorList>
    </citation>
    <scope>NUCLEOTIDE SEQUENCE [LARGE SCALE GENOMIC DNA]</scope>
</reference>
<name>ACCD_ARAHI</name>
<comment type="function">
    <text evidence="2">Component of the acetyl coenzyme A carboxylase (ACC) complex. Biotin carboxylase (BC) catalyzes the carboxylation of biotin on its carrier protein (BCCP) and then the CO(2) group is transferred by the transcarboxylase to acetyl-CoA to form malonyl-CoA.</text>
</comment>
<comment type="catalytic activity">
    <reaction evidence="2">
        <text>N(6)-carboxybiotinyl-L-lysyl-[protein] + acetyl-CoA = N(6)-biotinyl-L-lysyl-[protein] + malonyl-CoA</text>
        <dbReference type="Rhea" id="RHEA:54728"/>
        <dbReference type="Rhea" id="RHEA-COMP:10505"/>
        <dbReference type="Rhea" id="RHEA-COMP:10506"/>
        <dbReference type="ChEBI" id="CHEBI:57288"/>
        <dbReference type="ChEBI" id="CHEBI:57384"/>
        <dbReference type="ChEBI" id="CHEBI:83144"/>
        <dbReference type="ChEBI" id="CHEBI:83145"/>
        <dbReference type="EC" id="2.1.3.15"/>
    </reaction>
</comment>
<comment type="cofactor">
    <cofactor evidence="2">
        <name>Zn(2+)</name>
        <dbReference type="ChEBI" id="CHEBI:29105"/>
    </cofactor>
    <text evidence="2">Binds 1 zinc ion per subunit.</text>
</comment>
<comment type="pathway">
    <text evidence="2">Lipid metabolism; malonyl-CoA biosynthesis; malonyl-CoA from acetyl-CoA: step 1/1.</text>
</comment>
<comment type="subunit">
    <text evidence="1">Acetyl-CoA carboxylase is a heterohexamer composed of biotin carboxyl carrier protein, biotin carboxylase and 2 subunits each of ACCase subunit alpha and ACCase plastid-coded subunit beta (accD).</text>
</comment>
<comment type="subcellular location">
    <subcellularLocation>
        <location evidence="2">Plastid</location>
        <location evidence="2">Chloroplast stroma</location>
    </subcellularLocation>
</comment>
<comment type="similarity">
    <text evidence="2">Belongs to the AccD/PCCB family.</text>
</comment>